<name>RS9_YERE8</name>
<protein>
    <recommendedName>
        <fullName evidence="1">Small ribosomal subunit protein uS9</fullName>
    </recommendedName>
    <alternativeName>
        <fullName evidence="2">30S ribosomal protein S9</fullName>
    </alternativeName>
</protein>
<sequence>MAENQYYGTGRRKSSAARVFLKPGSGKIVINQRSLEVYFGRETARMVVNQPLELVDMVTKFDMYITVKGGGISGQAGAIRHGITRALMEYDESLRGELRKAGFVTRDAREVERKKVGLRKARRRPQFSKR</sequence>
<proteinExistence type="inferred from homology"/>
<dbReference type="EMBL" id="AM286415">
    <property type="protein sequence ID" value="CAL13766.1"/>
    <property type="molecule type" value="Genomic_DNA"/>
</dbReference>
<dbReference type="RefSeq" id="WP_005162424.1">
    <property type="nucleotide sequence ID" value="NC_008800.1"/>
</dbReference>
<dbReference type="RefSeq" id="YP_001007894.1">
    <property type="nucleotide sequence ID" value="NC_008800.1"/>
</dbReference>
<dbReference type="SMR" id="A1JR92"/>
<dbReference type="GeneID" id="97454433"/>
<dbReference type="KEGG" id="yen:YE3740"/>
<dbReference type="PATRIC" id="fig|393305.7.peg.3983"/>
<dbReference type="eggNOG" id="COG0103">
    <property type="taxonomic scope" value="Bacteria"/>
</dbReference>
<dbReference type="HOGENOM" id="CLU_046483_2_1_6"/>
<dbReference type="OrthoDB" id="9803965at2"/>
<dbReference type="Proteomes" id="UP000000642">
    <property type="component" value="Chromosome"/>
</dbReference>
<dbReference type="GO" id="GO:0022627">
    <property type="term" value="C:cytosolic small ribosomal subunit"/>
    <property type="evidence" value="ECO:0007669"/>
    <property type="project" value="TreeGrafter"/>
</dbReference>
<dbReference type="GO" id="GO:0003723">
    <property type="term" value="F:RNA binding"/>
    <property type="evidence" value="ECO:0007669"/>
    <property type="project" value="TreeGrafter"/>
</dbReference>
<dbReference type="GO" id="GO:0003735">
    <property type="term" value="F:structural constituent of ribosome"/>
    <property type="evidence" value="ECO:0007669"/>
    <property type="project" value="InterPro"/>
</dbReference>
<dbReference type="GO" id="GO:0006412">
    <property type="term" value="P:translation"/>
    <property type="evidence" value="ECO:0007669"/>
    <property type="project" value="UniProtKB-UniRule"/>
</dbReference>
<dbReference type="FunFam" id="3.30.230.10:FF:000001">
    <property type="entry name" value="30S ribosomal protein S9"/>
    <property type="match status" value="1"/>
</dbReference>
<dbReference type="Gene3D" id="3.30.230.10">
    <property type="match status" value="1"/>
</dbReference>
<dbReference type="HAMAP" id="MF_00532_B">
    <property type="entry name" value="Ribosomal_uS9_B"/>
    <property type="match status" value="1"/>
</dbReference>
<dbReference type="InterPro" id="IPR020568">
    <property type="entry name" value="Ribosomal_Su5_D2-typ_SF"/>
</dbReference>
<dbReference type="InterPro" id="IPR000754">
    <property type="entry name" value="Ribosomal_uS9"/>
</dbReference>
<dbReference type="InterPro" id="IPR023035">
    <property type="entry name" value="Ribosomal_uS9_bac/plastid"/>
</dbReference>
<dbReference type="InterPro" id="IPR020574">
    <property type="entry name" value="Ribosomal_uS9_CS"/>
</dbReference>
<dbReference type="InterPro" id="IPR014721">
    <property type="entry name" value="Ribsml_uS5_D2-typ_fold_subgr"/>
</dbReference>
<dbReference type="NCBIfam" id="NF001099">
    <property type="entry name" value="PRK00132.1"/>
    <property type="match status" value="1"/>
</dbReference>
<dbReference type="PANTHER" id="PTHR21569">
    <property type="entry name" value="RIBOSOMAL PROTEIN S9"/>
    <property type="match status" value="1"/>
</dbReference>
<dbReference type="PANTHER" id="PTHR21569:SF1">
    <property type="entry name" value="SMALL RIBOSOMAL SUBUNIT PROTEIN US9M"/>
    <property type="match status" value="1"/>
</dbReference>
<dbReference type="Pfam" id="PF00380">
    <property type="entry name" value="Ribosomal_S9"/>
    <property type="match status" value="1"/>
</dbReference>
<dbReference type="SUPFAM" id="SSF54211">
    <property type="entry name" value="Ribosomal protein S5 domain 2-like"/>
    <property type="match status" value="1"/>
</dbReference>
<dbReference type="PROSITE" id="PS00360">
    <property type="entry name" value="RIBOSOMAL_S9"/>
    <property type="match status" value="1"/>
</dbReference>
<organism>
    <name type="scientific">Yersinia enterocolitica serotype O:8 / biotype 1B (strain NCTC 13174 / 8081)</name>
    <dbReference type="NCBI Taxonomy" id="393305"/>
    <lineage>
        <taxon>Bacteria</taxon>
        <taxon>Pseudomonadati</taxon>
        <taxon>Pseudomonadota</taxon>
        <taxon>Gammaproteobacteria</taxon>
        <taxon>Enterobacterales</taxon>
        <taxon>Yersiniaceae</taxon>
        <taxon>Yersinia</taxon>
    </lineage>
</organism>
<accession>A1JR92</accession>
<gene>
    <name evidence="1" type="primary">rpsI</name>
    <name type="ordered locus">YE3740</name>
</gene>
<comment type="similarity">
    <text evidence="1">Belongs to the universal ribosomal protein uS9 family.</text>
</comment>
<keyword id="KW-0687">Ribonucleoprotein</keyword>
<keyword id="KW-0689">Ribosomal protein</keyword>
<evidence type="ECO:0000255" key="1">
    <source>
        <dbReference type="HAMAP-Rule" id="MF_00532"/>
    </source>
</evidence>
<evidence type="ECO:0000305" key="2"/>
<feature type="chain" id="PRO_1000051368" description="Small ribosomal subunit protein uS9">
    <location>
        <begin position="1"/>
        <end position="130"/>
    </location>
</feature>
<reference key="1">
    <citation type="journal article" date="2006" name="PLoS Genet.">
        <title>The complete genome sequence and comparative genome analysis of the high pathogenicity Yersinia enterocolitica strain 8081.</title>
        <authorList>
            <person name="Thomson N.R."/>
            <person name="Howard S."/>
            <person name="Wren B.W."/>
            <person name="Holden M.T.G."/>
            <person name="Crossman L."/>
            <person name="Challis G.L."/>
            <person name="Churcher C."/>
            <person name="Mungall K."/>
            <person name="Brooks K."/>
            <person name="Chillingworth T."/>
            <person name="Feltwell T."/>
            <person name="Abdellah Z."/>
            <person name="Hauser H."/>
            <person name="Jagels K."/>
            <person name="Maddison M."/>
            <person name="Moule S."/>
            <person name="Sanders M."/>
            <person name="Whitehead S."/>
            <person name="Quail M.A."/>
            <person name="Dougan G."/>
            <person name="Parkhill J."/>
            <person name="Prentice M.B."/>
        </authorList>
    </citation>
    <scope>NUCLEOTIDE SEQUENCE [LARGE SCALE GENOMIC DNA]</scope>
    <source>
        <strain>NCTC 13174 / 8081</strain>
    </source>
</reference>